<feature type="chain" id="PRO_0000099150" description="DNA-directed RNA polymerase 18 kDa subunit">
    <location>
        <begin position="1"/>
        <end position="161"/>
    </location>
</feature>
<feature type="strand" evidence="5">
    <location>
        <begin position="3"/>
        <end position="14"/>
    </location>
</feature>
<feature type="helix" evidence="5">
    <location>
        <begin position="16"/>
        <end position="18"/>
    </location>
</feature>
<feature type="helix" evidence="5">
    <location>
        <begin position="23"/>
        <end position="35"/>
    </location>
</feature>
<feature type="strand" evidence="5">
    <location>
        <begin position="43"/>
        <end position="50"/>
    </location>
</feature>
<feature type="strand" evidence="5">
    <location>
        <begin position="52"/>
        <end position="54"/>
    </location>
</feature>
<feature type="strand" evidence="5">
    <location>
        <begin position="59"/>
        <end position="61"/>
    </location>
</feature>
<feature type="strand" evidence="5">
    <location>
        <begin position="63"/>
        <end position="77"/>
    </location>
</feature>
<feature type="strand" evidence="5">
    <location>
        <begin position="84"/>
        <end position="90"/>
    </location>
</feature>
<feature type="strand" evidence="5">
    <location>
        <begin position="94"/>
        <end position="96"/>
    </location>
</feature>
<feature type="strand" evidence="5">
    <location>
        <begin position="98"/>
        <end position="101"/>
    </location>
</feature>
<feature type="strand" evidence="5">
    <location>
        <begin position="104"/>
        <end position="107"/>
    </location>
</feature>
<feature type="strand" evidence="5">
    <location>
        <begin position="137"/>
        <end position="144"/>
    </location>
</feature>
<feature type="strand" evidence="5">
    <location>
        <begin position="151"/>
        <end position="158"/>
    </location>
</feature>
<dbReference type="EC" id="2.7.7.6"/>
<dbReference type="EMBL" id="U94848">
    <property type="protein sequence ID" value="AAB96516.1"/>
    <property type="molecule type" value="Genomic_DNA"/>
</dbReference>
<dbReference type="EMBL" id="AY603355">
    <property type="protein sequence ID" value="AAT10502.1"/>
    <property type="molecule type" value="Genomic_DNA"/>
</dbReference>
<dbReference type="RefSeq" id="YP_232994.1">
    <property type="nucleotide sequence ID" value="NC_006998.1"/>
</dbReference>
<dbReference type="PDB" id="6RIE">
    <property type="method" value="EM"/>
    <property type="resolution" value="3.10 A"/>
    <property type="chains" value="G=1-161"/>
</dbReference>
<dbReference type="PDBsum" id="6RIE"/>
<dbReference type="SMR" id="Q76ZS0"/>
<dbReference type="DNASU" id="3707568"/>
<dbReference type="GeneID" id="3707568"/>
<dbReference type="KEGG" id="vg:3707568"/>
<dbReference type="Proteomes" id="UP000159908">
    <property type="component" value="Segment"/>
</dbReference>
<dbReference type="Proteomes" id="UP000172909">
    <property type="component" value="Segment"/>
</dbReference>
<dbReference type="GO" id="GO:0000428">
    <property type="term" value="C:DNA-directed RNA polymerase complex"/>
    <property type="evidence" value="ECO:0007669"/>
    <property type="project" value="UniProtKB-KW"/>
</dbReference>
<dbReference type="GO" id="GO:0044423">
    <property type="term" value="C:virion component"/>
    <property type="evidence" value="ECO:0007669"/>
    <property type="project" value="UniProtKB-KW"/>
</dbReference>
<dbReference type="GO" id="GO:0003677">
    <property type="term" value="F:DNA binding"/>
    <property type="evidence" value="ECO:0007669"/>
    <property type="project" value="InterPro"/>
</dbReference>
<dbReference type="GO" id="GO:0003899">
    <property type="term" value="F:DNA-directed RNA polymerase activity"/>
    <property type="evidence" value="ECO:0007669"/>
    <property type="project" value="UniProtKB-EC"/>
</dbReference>
<dbReference type="GO" id="GO:0019083">
    <property type="term" value="P:viral transcription"/>
    <property type="evidence" value="ECO:0007669"/>
    <property type="project" value="InterPro"/>
</dbReference>
<dbReference type="InterPro" id="IPR004973">
    <property type="entry name" value="DNA-dir_RNA_pol_18kDa_poxviral"/>
</dbReference>
<dbReference type="Pfam" id="PF03293">
    <property type="entry name" value="Pox_RNA_pol"/>
    <property type="match status" value="1"/>
</dbReference>
<evidence type="ECO:0000250" key="1">
    <source>
        <dbReference type="UniProtKB" id="P04310"/>
    </source>
</evidence>
<evidence type="ECO:0000269" key="2">
    <source>
    </source>
</evidence>
<evidence type="ECO:0000305" key="3"/>
<evidence type="ECO:0007744" key="4">
    <source>
        <dbReference type="PDB" id="6RIE"/>
    </source>
</evidence>
<evidence type="ECO:0007829" key="5">
    <source>
        <dbReference type="PDB" id="6RIE"/>
    </source>
</evidence>
<gene>
    <name type="primary">OPG119</name>
    <name type="synonym">RPO18</name>
    <name type="ordered locus">MVA104R</name>
    <name type="ordered locus">ACAM3000_MVA_104</name>
    <name type="ORF">D7R</name>
</gene>
<organism>
    <name type="scientific">Vaccinia virus (strain Ankara)</name>
    <name type="common">VACV</name>
    <dbReference type="NCBI Taxonomy" id="126794"/>
    <lineage>
        <taxon>Viruses</taxon>
        <taxon>Varidnaviria</taxon>
        <taxon>Bamfordvirae</taxon>
        <taxon>Nucleocytoviricota</taxon>
        <taxon>Pokkesviricetes</taxon>
        <taxon>Chitovirales</taxon>
        <taxon>Poxviridae</taxon>
        <taxon>Chordopoxvirinae</taxon>
        <taxon>Orthopoxvirus</taxon>
        <taxon>Vaccinia virus</taxon>
    </lineage>
</organism>
<organismHost>
    <name type="scientific">Homo sapiens</name>
    <name type="common">Human</name>
    <dbReference type="NCBI Taxonomy" id="9606"/>
</organismHost>
<comment type="function">
    <text evidence="1 2">Part of the DNA-dependent RNA polymerase which catalyzes the transcription of viral DNA into RNA using the four ribonucleoside triphosphates as substrates (PubMed:31835031). Responsible for the transcription of early, intermediate and late genes. DNA-dependent RNA polymerase associates with the early transcription factor (ETF), itself composed of OPG118 and OPG133, thereby allowing the early genes transcription. Late transcription, and probably also intermediate transcription, require newly synthesized RNA polymerase.</text>
</comment>
<comment type="catalytic activity">
    <reaction evidence="1">
        <text>RNA(n) + a ribonucleoside 5'-triphosphate = RNA(n+1) + diphosphate</text>
        <dbReference type="Rhea" id="RHEA:21248"/>
        <dbReference type="Rhea" id="RHEA-COMP:14527"/>
        <dbReference type="Rhea" id="RHEA-COMP:17342"/>
        <dbReference type="ChEBI" id="CHEBI:33019"/>
        <dbReference type="ChEBI" id="CHEBI:61557"/>
        <dbReference type="ChEBI" id="CHEBI:140395"/>
        <dbReference type="EC" id="2.7.7.6"/>
    </reaction>
</comment>
<comment type="subunit">
    <text evidence="2">The DNA-dependent RNA polymerase used for intermediate and late genes expression consists of eight subunits Rpo30/OPG66, Rpo7/OPG90, Rpo22/OPG103, Rpo147/OPG105, Rpo18/OPG119, Rpo19/OPG131, Rpo132/OPG151 and Rpo35/OPG156 (PubMed:31835031). The same holoenzyme, with the addition of the transcription-specificity factor OPG109, is used for early gene expression.</text>
</comment>
<comment type="subcellular location">
    <subcellularLocation>
        <location evidence="1">Virion</location>
    </subcellularLocation>
    <text evidence="1">All the enzymes and other proteins required to synthesize early mRNAs are packaged within the virion core along with the DNA genome. This is necessary because viral early mRNAs are synthesized within minutes after virus entry into the cell and are extruded through pores in the core particle.</text>
</comment>
<comment type="induction">
    <text>Expressed in the early phase of the viral replicative cycle.</text>
</comment>
<comment type="similarity">
    <text evidence="3">Belongs to the poxviridae DNA-directed RNA polymerase 18 kDa subunit family.</text>
</comment>
<name>RP18_VACCA</name>
<keyword id="KW-0002">3D-structure</keyword>
<keyword id="KW-0240">DNA-directed RNA polymerase</keyword>
<keyword id="KW-0244">Early protein</keyword>
<keyword id="KW-0548">Nucleotidyltransferase</keyword>
<keyword id="KW-0804">Transcription</keyword>
<keyword id="KW-0808">Transferase</keyword>
<keyword id="KW-0946">Virion</keyword>
<sequence length="161" mass="17911">MSSFVTNGYLPVTLEPHELTLDIKTNIRNAVYKTYLHREISGKMAKKIEIREDVELPLGEIVNNSVVINVPCVITYAYYHVGDIVRGTLNIEDESNVTIQCGDLICKLSRDSGTVSFSDSKYCFFRNGNAYDNGSEVTAVLMEAQQGIESSFVFLANIVDS</sequence>
<proteinExistence type="evidence at protein level"/>
<accession>Q76ZS0</accession>
<reference key="1">
    <citation type="journal article" date="1998" name="Virology">
        <title>The complete genomic sequence of the modified vaccinia Ankara strain: comparison with other orthopoxviruses.</title>
        <authorList>
            <person name="Antoine G."/>
            <person name="Scheiflinger F."/>
            <person name="Dorner F."/>
            <person name="Falkner F.G."/>
        </authorList>
    </citation>
    <scope>NUCLEOTIDE SEQUENCE [LARGE SCALE GENOMIC DNA]</scope>
</reference>
<reference key="2">
    <citation type="submission" date="2004-04" db="EMBL/GenBank/DDBJ databases">
        <authorList>
            <person name="Esposito J.J."/>
            <person name="Frace M."/>
            <person name="Sammons S.A."/>
            <person name="Olsen-Rasmussen M.S."/>
            <person name="Osborne J."/>
            <person name="Khristova M."/>
            <person name="Wohlhueter R.M."/>
        </authorList>
    </citation>
    <scope>NUCLEOTIDE SEQUENCE [LARGE SCALE GENOMIC DNA]</scope>
    <source>
        <strain>Isolate Acambis 3000</strain>
    </source>
</reference>
<reference key="3">
    <citation type="journal article" date="2003" name="J. Gen. Virol.">
        <title>Vaccinia virus transcription.</title>
        <authorList>
            <person name="Broyles S.S."/>
        </authorList>
    </citation>
    <scope>REVIEW</scope>
</reference>
<reference evidence="4" key="4">
    <citation type="journal article" date="2019" name="Cell">
        <title>Structural Basis of Poxvirus Transcription: Transcribing and Capping Vaccinia Complexes.</title>
        <authorList>
            <person name="Hillen H.S."/>
            <person name="Bartuli J."/>
            <person name="Grimm C."/>
            <person name="Dienemann C."/>
            <person name="Bedenk K."/>
            <person name="Szalay A.A."/>
            <person name="Fischer U."/>
            <person name="Cramer P."/>
        </authorList>
    </citation>
    <scope>STRUCTURE BY ELECTRON MICROSCOPY (3.10 ANGSTROMS) IN COMPLEX WITH OPG66; OPG90; OPG103; OPG105; OPG131; OPG151 AND OPG156</scope>
    <scope>FUNCTION</scope>
</reference>
<protein>
    <recommendedName>
        <fullName>DNA-directed RNA polymerase 18 kDa subunit</fullName>
        <ecNumber>2.7.7.6</ecNumber>
    </recommendedName>
</protein>